<accession>P41519</accession>
<reference key="1">
    <citation type="journal article" date="1990" name="Peptides">
        <title>Purification of peptide hormones from chinchilla pancreas by chemical assay.</title>
        <authorList>
            <person name="Eng J."/>
            <person name="Kleinman W.A."/>
            <person name="Chu L.S."/>
        </authorList>
    </citation>
    <scope>PROTEIN SEQUENCE</scope>
    <source>
        <tissue>Pancreas</tissue>
    </source>
</reference>
<feature type="peptide" id="PRO_0000044795" description="Pancreatic polypeptide">
    <location>
        <begin position="1"/>
        <end position="36"/>
    </location>
</feature>
<feature type="modified residue" description="Tyrosine amide" evidence="1">
    <location>
        <position position="36"/>
    </location>
</feature>
<comment type="function">
    <text evidence="2">Hormone secreted by pancreatic cells that acts as a regulator of pancreatic and gastrointestinal functions probably by signaling through the G protein-coupled receptor NPY4R2.</text>
</comment>
<comment type="subcellular location">
    <subcellularLocation>
        <location evidence="2">Secreted</location>
    </subcellularLocation>
</comment>
<comment type="similarity">
    <text evidence="4">Belongs to the NPY family.</text>
</comment>
<name>PAHO_CHICH</name>
<proteinExistence type="evidence at protein level"/>
<protein>
    <recommendedName>
        <fullName evidence="3">Pancreatic polypeptide</fullName>
        <shortName evidence="3">PP</shortName>
    </recommendedName>
</protein>
<sequence>APLEPVYPGDNATPEQMAQYAAEMRRYINMLTRPRY</sequence>
<gene>
    <name type="primary">PPY</name>
</gene>
<dbReference type="PIR" id="B60413">
    <property type="entry name" value="B60413"/>
</dbReference>
<dbReference type="SMR" id="P41519"/>
<dbReference type="GO" id="GO:0005615">
    <property type="term" value="C:extracellular space"/>
    <property type="evidence" value="ECO:0007669"/>
    <property type="project" value="TreeGrafter"/>
</dbReference>
<dbReference type="GO" id="GO:0005184">
    <property type="term" value="F:neuropeptide hormone activity"/>
    <property type="evidence" value="ECO:0007669"/>
    <property type="project" value="TreeGrafter"/>
</dbReference>
<dbReference type="GO" id="GO:0031841">
    <property type="term" value="F:neuropeptide Y receptor binding"/>
    <property type="evidence" value="ECO:0007669"/>
    <property type="project" value="TreeGrafter"/>
</dbReference>
<dbReference type="GO" id="GO:0007631">
    <property type="term" value="P:feeding behavior"/>
    <property type="evidence" value="ECO:0007669"/>
    <property type="project" value="TreeGrafter"/>
</dbReference>
<dbReference type="GO" id="GO:0007218">
    <property type="term" value="P:neuropeptide signaling pathway"/>
    <property type="evidence" value="ECO:0007669"/>
    <property type="project" value="TreeGrafter"/>
</dbReference>
<dbReference type="CDD" id="cd00126">
    <property type="entry name" value="PAH"/>
    <property type="match status" value="1"/>
</dbReference>
<dbReference type="Gene3D" id="6.10.250.900">
    <property type="match status" value="1"/>
</dbReference>
<dbReference type="InterPro" id="IPR001955">
    <property type="entry name" value="Pancreatic_hormone-like"/>
</dbReference>
<dbReference type="InterPro" id="IPR020392">
    <property type="entry name" value="Pancreatic_hormone-like_CS"/>
</dbReference>
<dbReference type="PANTHER" id="PTHR10533">
    <property type="entry name" value="NEUROPEPTIDE Y/PANCREATIC HORMONE/PEPTIDE YY"/>
    <property type="match status" value="1"/>
</dbReference>
<dbReference type="PANTHER" id="PTHR10533:SF2">
    <property type="entry name" value="PANCREATIC POLYPEPTIDE PROHORMONE"/>
    <property type="match status" value="1"/>
</dbReference>
<dbReference type="Pfam" id="PF00159">
    <property type="entry name" value="Hormone_3"/>
    <property type="match status" value="1"/>
</dbReference>
<dbReference type="PRINTS" id="PR00278">
    <property type="entry name" value="PANCHORMONE"/>
</dbReference>
<dbReference type="SMART" id="SM00309">
    <property type="entry name" value="PAH"/>
    <property type="match status" value="1"/>
</dbReference>
<dbReference type="PROSITE" id="PS00265">
    <property type="entry name" value="PANCREATIC_HORMONE_1"/>
    <property type="match status" value="1"/>
</dbReference>
<dbReference type="PROSITE" id="PS50276">
    <property type="entry name" value="PANCREATIC_HORMONE_2"/>
    <property type="match status" value="1"/>
</dbReference>
<evidence type="ECO:0000250" key="1"/>
<evidence type="ECO:0000250" key="2">
    <source>
        <dbReference type="UniProtKB" id="P01298"/>
    </source>
</evidence>
<evidence type="ECO:0000303" key="3">
    <source>
    </source>
</evidence>
<evidence type="ECO:0000305" key="4"/>
<keyword id="KW-0027">Amidation</keyword>
<keyword id="KW-0903">Direct protein sequencing</keyword>
<keyword id="KW-0372">Hormone</keyword>
<keyword id="KW-0964">Secreted</keyword>
<organism>
    <name type="scientific">Chinchilla chinchilla</name>
    <name type="common">Short-tailed chinchilla</name>
    <name type="synonym">Chinchilla brevicaudata</name>
    <dbReference type="NCBI Taxonomy" id="10152"/>
    <lineage>
        <taxon>Eukaryota</taxon>
        <taxon>Metazoa</taxon>
        <taxon>Chordata</taxon>
        <taxon>Craniata</taxon>
        <taxon>Vertebrata</taxon>
        <taxon>Euteleostomi</taxon>
        <taxon>Mammalia</taxon>
        <taxon>Eutheria</taxon>
        <taxon>Euarchontoglires</taxon>
        <taxon>Glires</taxon>
        <taxon>Rodentia</taxon>
        <taxon>Hystricomorpha</taxon>
        <taxon>Chinchillidae</taxon>
        <taxon>Chinchilla</taxon>
    </lineage>
</organism>